<keyword id="KW-0687">Ribonucleoprotein</keyword>
<keyword id="KW-0689">Ribosomal protein</keyword>
<keyword id="KW-0694">RNA-binding</keyword>
<keyword id="KW-0699">rRNA-binding</keyword>
<gene>
    <name evidence="1" type="primary">rplU</name>
    <name type="ordered locus">Mrad2831_0108</name>
</gene>
<dbReference type="EMBL" id="CP001001">
    <property type="protein sequence ID" value="ACB22135.1"/>
    <property type="molecule type" value="Genomic_DNA"/>
</dbReference>
<dbReference type="RefSeq" id="WP_010683509.1">
    <property type="nucleotide sequence ID" value="NC_010505.1"/>
</dbReference>
<dbReference type="SMR" id="B1M6A0"/>
<dbReference type="STRING" id="426355.Mrad2831_0108"/>
<dbReference type="GeneID" id="96605119"/>
<dbReference type="KEGG" id="mrd:Mrad2831_0108"/>
<dbReference type="eggNOG" id="COG0261">
    <property type="taxonomic scope" value="Bacteria"/>
</dbReference>
<dbReference type="HOGENOM" id="CLU_061463_3_2_5"/>
<dbReference type="OrthoDB" id="9813334at2"/>
<dbReference type="Proteomes" id="UP000006589">
    <property type="component" value="Chromosome"/>
</dbReference>
<dbReference type="GO" id="GO:0005737">
    <property type="term" value="C:cytoplasm"/>
    <property type="evidence" value="ECO:0007669"/>
    <property type="project" value="UniProtKB-ARBA"/>
</dbReference>
<dbReference type="GO" id="GO:1990904">
    <property type="term" value="C:ribonucleoprotein complex"/>
    <property type="evidence" value="ECO:0007669"/>
    <property type="project" value="UniProtKB-KW"/>
</dbReference>
<dbReference type="GO" id="GO:0005840">
    <property type="term" value="C:ribosome"/>
    <property type="evidence" value="ECO:0007669"/>
    <property type="project" value="UniProtKB-KW"/>
</dbReference>
<dbReference type="GO" id="GO:0019843">
    <property type="term" value="F:rRNA binding"/>
    <property type="evidence" value="ECO:0007669"/>
    <property type="project" value="UniProtKB-UniRule"/>
</dbReference>
<dbReference type="GO" id="GO:0003735">
    <property type="term" value="F:structural constituent of ribosome"/>
    <property type="evidence" value="ECO:0007669"/>
    <property type="project" value="InterPro"/>
</dbReference>
<dbReference type="GO" id="GO:0006412">
    <property type="term" value="P:translation"/>
    <property type="evidence" value="ECO:0007669"/>
    <property type="project" value="UniProtKB-UniRule"/>
</dbReference>
<dbReference type="HAMAP" id="MF_01363">
    <property type="entry name" value="Ribosomal_bL21"/>
    <property type="match status" value="1"/>
</dbReference>
<dbReference type="InterPro" id="IPR028909">
    <property type="entry name" value="bL21-like"/>
</dbReference>
<dbReference type="InterPro" id="IPR036164">
    <property type="entry name" value="bL21-like_sf"/>
</dbReference>
<dbReference type="InterPro" id="IPR001787">
    <property type="entry name" value="Ribosomal_bL21"/>
</dbReference>
<dbReference type="NCBIfam" id="TIGR00061">
    <property type="entry name" value="L21"/>
    <property type="match status" value="1"/>
</dbReference>
<dbReference type="PANTHER" id="PTHR21349">
    <property type="entry name" value="50S RIBOSOMAL PROTEIN L21"/>
    <property type="match status" value="1"/>
</dbReference>
<dbReference type="PANTHER" id="PTHR21349:SF0">
    <property type="entry name" value="LARGE RIBOSOMAL SUBUNIT PROTEIN BL21M"/>
    <property type="match status" value="1"/>
</dbReference>
<dbReference type="Pfam" id="PF00829">
    <property type="entry name" value="Ribosomal_L21p"/>
    <property type="match status" value="1"/>
</dbReference>
<dbReference type="SUPFAM" id="SSF141091">
    <property type="entry name" value="L21p-like"/>
    <property type="match status" value="1"/>
</dbReference>
<comment type="function">
    <text evidence="1">This protein binds to 23S rRNA in the presence of protein L20.</text>
</comment>
<comment type="subunit">
    <text evidence="1">Part of the 50S ribosomal subunit. Contacts protein L20.</text>
</comment>
<comment type="similarity">
    <text evidence="1">Belongs to the bacterial ribosomal protein bL21 family.</text>
</comment>
<sequence>MFAVIKTGGKQYRVAANDTITIASLAGEAGEAVTFGEVLLFADGAGATQVGAPTLSGISVTGEIVRHGRDKKVIAFKKRRRQNSRRKRGHRQDHTVVRITGISA</sequence>
<organism>
    <name type="scientific">Methylobacterium radiotolerans (strain ATCC 27329 / DSM 1819 / JCM 2831 / NBRC 15690 / NCIMB 10815 / 0-1)</name>
    <dbReference type="NCBI Taxonomy" id="426355"/>
    <lineage>
        <taxon>Bacteria</taxon>
        <taxon>Pseudomonadati</taxon>
        <taxon>Pseudomonadota</taxon>
        <taxon>Alphaproteobacteria</taxon>
        <taxon>Hyphomicrobiales</taxon>
        <taxon>Methylobacteriaceae</taxon>
        <taxon>Methylobacterium</taxon>
    </lineage>
</organism>
<protein>
    <recommendedName>
        <fullName evidence="1">Large ribosomal subunit protein bL21</fullName>
    </recommendedName>
    <alternativeName>
        <fullName evidence="3">50S ribosomal protein L21</fullName>
    </alternativeName>
</protein>
<proteinExistence type="inferred from homology"/>
<accession>B1M6A0</accession>
<name>RL21_METRJ</name>
<reference key="1">
    <citation type="submission" date="2008-03" db="EMBL/GenBank/DDBJ databases">
        <title>Complete sequence of chromosome of Methylobacterium radiotolerans JCM 2831.</title>
        <authorList>
            <consortium name="US DOE Joint Genome Institute"/>
            <person name="Copeland A."/>
            <person name="Lucas S."/>
            <person name="Lapidus A."/>
            <person name="Glavina del Rio T."/>
            <person name="Dalin E."/>
            <person name="Tice H."/>
            <person name="Bruce D."/>
            <person name="Goodwin L."/>
            <person name="Pitluck S."/>
            <person name="Kiss H."/>
            <person name="Brettin T."/>
            <person name="Detter J.C."/>
            <person name="Han C."/>
            <person name="Kuske C.R."/>
            <person name="Schmutz J."/>
            <person name="Larimer F."/>
            <person name="Land M."/>
            <person name="Hauser L."/>
            <person name="Kyrpides N."/>
            <person name="Mikhailova N."/>
            <person name="Marx C.J."/>
            <person name="Richardson P."/>
        </authorList>
    </citation>
    <scope>NUCLEOTIDE SEQUENCE [LARGE SCALE GENOMIC DNA]</scope>
    <source>
        <strain>ATCC 27329 / DSM 1819 / JCM 2831 / NBRC 15690 / NCIMB 10815 / 0-1</strain>
    </source>
</reference>
<evidence type="ECO:0000255" key="1">
    <source>
        <dbReference type="HAMAP-Rule" id="MF_01363"/>
    </source>
</evidence>
<evidence type="ECO:0000256" key="2">
    <source>
        <dbReference type="SAM" id="MobiDB-lite"/>
    </source>
</evidence>
<evidence type="ECO:0000305" key="3"/>
<feature type="chain" id="PRO_1000143820" description="Large ribosomal subunit protein bL21">
    <location>
        <begin position="1"/>
        <end position="104"/>
    </location>
</feature>
<feature type="region of interest" description="Disordered" evidence="2">
    <location>
        <begin position="78"/>
        <end position="104"/>
    </location>
</feature>
<feature type="compositionally biased region" description="Basic residues" evidence="2">
    <location>
        <begin position="78"/>
        <end position="91"/>
    </location>
</feature>